<keyword id="KW-0067">ATP-binding</keyword>
<keyword id="KW-0963">Cytoplasm</keyword>
<keyword id="KW-0436">Ligase</keyword>
<keyword id="KW-0547">Nucleotide-binding</keyword>
<keyword id="KW-0658">Purine biosynthesis</keyword>
<keyword id="KW-1185">Reference proteome</keyword>
<reference key="1">
    <citation type="journal article" date="2006" name="J. Bacteriol.">
        <title>Complete genome sequence of the dehalorespiring bacterium Desulfitobacterium hafniense Y51 and comparison with Dehalococcoides ethenogenes 195.</title>
        <authorList>
            <person name="Nonaka H."/>
            <person name="Keresztes G."/>
            <person name="Shinoda Y."/>
            <person name="Ikenaga Y."/>
            <person name="Abe M."/>
            <person name="Naito K."/>
            <person name="Inatomi K."/>
            <person name="Furukawa K."/>
            <person name="Inui M."/>
            <person name="Yukawa H."/>
        </authorList>
    </citation>
    <scope>NUCLEOTIDE SEQUENCE [LARGE SCALE GENOMIC DNA]</scope>
    <source>
        <strain>Y51</strain>
    </source>
</reference>
<sequence>MGYSYRQAGVDIDAGNQAVELMKPAVKRTVRPEVMGGLGGFGGLFALDLKKYPEPVLVSGTDGVGTKLKLAFQMNRHDTIGQDAVAMCVNDILVQGAEPLFFLDYLAVGKLVPERVAQVVGGIAKGCELAGCALIGGETAEMPGFYDEGEYDIAGFAVGAVNRPDLIDGSQIQAGDVLIGLPSSGFHSNGYSLVRKIFTPDLWEKNYPELGETLGEALIRPTRIYVKTVLPLIESRKVLGMAHITGGGLTENIPRILPEGLGIKIARSAWQVPALFTLLQRLGEVEEAEMLRTFNMGIGFVLIVHPEDVDFIQTQLQAAGEKCFVLGEVSGQSEGVSYL</sequence>
<proteinExistence type="inferred from homology"/>
<gene>
    <name evidence="1" type="primary">purM</name>
    <name type="ordered locus">DSY3929</name>
</gene>
<organism>
    <name type="scientific">Desulfitobacterium hafniense (strain Y51)</name>
    <dbReference type="NCBI Taxonomy" id="138119"/>
    <lineage>
        <taxon>Bacteria</taxon>
        <taxon>Bacillati</taxon>
        <taxon>Bacillota</taxon>
        <taxon>Clostridia</taxon>
        <taxon>Eubacteriales</taxon>
        <taxon>Desulfitobacteriaceae</taxon>
        <taxon>Desulfitobacterium</taxon>
    </lineage>
</organism>
<name>PUR5_DESHY</name>
<accession>Q24QH4</accession>
<dbReference type="EC" id="6.3.3.1" evidence="1"/>
<dbReference type="EMBL" id="AP008230">
    <property type="protein sequence ID" value="BAE85718.1"/>
    <property type="molecule type" value="Genomic_DNA"/>
</dbReference>
<dbReference type="RefSeq" id="WP_011461474.1">
    <property type="nucleotide sequence ID" value="NC_007907.1"/>
</dbReference>
<dbReference type="SMR" id="Q24QH4"/>
<dbReference type="STRING" id="138119.DSY3929"/>
<dbReference type="KEGG" id="dsy:DSY3929"/>
<dbReference type="eggNOG" id="COG0150">
    <property type="taxonomic scope" value="Bacteria"/>
</dbReference>
<dbReference type="HOGENOM" id="CLU_047116_0_0_9"/>
<dbReference type="UniPathway" id="UPA00074">
    <property type="reaction ID" value="UER00129"/>
</dbReference>
<dbReference type="Proteomes" id="UP000001946">
    <property type="component" value="Chromosome"/>
</dbReference>
<dbReference type="GO" id="GO:0005829">
    <property type="term" value="C:cytosol"/>
    <property type="evidence" value="ECO:0007669"/>
    <property type="project" value="TreeGrafter"/>
</dbReference>
<dbReference type="GO" id="GO:0005524">
    <property type="term" value="F:ATP binding"/>
    <property type="evidence" value="ECO:0007669"/>
    <property type="project" value="UniProtKB-KW"/>
</dbReference>
<dbReference type="GO" id="GO:0004637">
    <property type="term" value="F:phosphoribosylamine-glycine ligase activity"/>
    <property type="evidence" value="ECO:0007669"/>
    <property type="project" value="TreeGrafter"/>
</dbReference>
<dbReference type="GO" id="GO:0004641">
    <property type="term" value="F:phosphoribosylformylglycinamidine cyclo-ligase activity"/>
    <property type="evidence" value="ECO:0007669"/>
    <property type="project" value="UniProtKB-UniRule"/>
</dbReference>
<dbReference type="GO" id="GO:0006189">
    <property type="term" value="P:'de novo' IMP biosynthetic process"/>
    <property type="evidence" value="ECO:0007669"/>
    <property type="project" value="UniProtKB-UniRule"/>
</dbReference>
<dbReference type="GO" id="GO:0046084">
    <property type="term" value="P:adenine biosynthetic process"/>
    <property type="evidence" value="ECO:0007669"/>
    <property type="project" value="TreeGrafter"/>
</dbReference>
<dbReference type="CDD" id="cd02196">
    <property type="entry name" value="PurM"/>
    <property type="match status" value="1"/>
</dbReference>
<dbReference type="FunFam" id="3.30.1330.10:FF:000001">
    <property type="entry name" value="Phosphoribosylformylglycinamidine cyclo-ligase"/>
    <property type="match status" value="1"/>
</dbReference>
<dbReference type="FunFam" id="3.90.650.10:FF:000001">
    <property type="entry name" value="Phosphoribosylformylglycinamidine cyclo-ligase"/>
    <property type="match status" value="1"/>
</dbReference>
<dbReference type="Gene3D" id="3.90.650.10">
    <property type="entry name" value="PurM-like C-terminal domain"/>
    <property type="match status" value="1"/>
</dbReference>
<dbReference type="Gene3D" id="3.30.1330.10">
    <property type="entry name" value="PurM-like, N-terminal domain"/>
    <property type="match status" value="1"/>
</dbReference>
<dbReference type="HAMAP" id="MF_00741">
    <property type="entry name" value="AIRS"/>
    <property type="match status" value="1"/>
</dbReference>
<dbReference type="InterPro" id="IPR010918">
    <property type="entry name" value="PurM-like_C_dom"/>
</dbReference>
<dbReference type="InterPro" id="IPR036676">
    <property type="entry name" value="PurM-like_C_sf"/>
</dbReference>
<dbReference type="InterPro" id="IPR016188">
    <property type="entry name" value="PurM-like_N"/>
</dbReference>
<dbReference type="InterPro" id="IPR036921">
    <property type="entry name" value="PurM-like_N_sf"/>
</dbReference>
<dbReference type="InterPro" id="IPR004733">
    <property type="entry name" value="PurM_cligase"/>
</dbReference>
<dbReference type="NCBIfam" id="TIGR00878">
    <property type="entry name" value="purM"/>
    <property type="match status" value="1"/>
</dbReference>
<dbReference type="PANTHER" id="PTHR10520:SF12">
    <property type="entry name" value="TRIFUNCTIONAL PURINE BIOSYNTHETIC PROTEIN ADENOSINE-3"/>
    <property type="match status" value="1"/>
</dbReference>
<dbReference type="PANTHER" id="PTHR10520">
    <property type="entry name" value="TRIFUNCTIONAL PURINE BIOSYNTHETIC PROTEIN ADENOSINE-3-RELATED"/>
    <property type="match status" value="1"/>
</dbReference>
<dbReference type="Pfam" id="PF00586">
    <property type="entry name" value="AIRS"/>
    <property type="match status" value="1"/>
</dbReference>
<dbReference type="Pfam" id="PF02769">
    <property type="entry name" value="AIRS_C"/>
    <property type="match status" value="1"/>
</dbReference>
<dbReference type="SUPFAM" id="SSF56042">
    <property type="entry name" value="PurM C-terminal domain-like"/>
    <property type="match status" value="1"/>
</dbReference>
<dbReference type="SUPFAM" id="SSF55326">
    <property type="entry name" value="PurM N-terminal domain-like"/>
    <property type="match status" value="1"/>
</dbReference>
<comment type="catalytic activity">
    <reaction evidence="1">
        <text>2-formamido-N(1)-(5-O-phospho-beta-D-ribosyl)acetamidine + ATP = 5-amino-1-(5-phospho-beta-D-ribosyl)imidazole + ADP + phosphate + H(+)</text>
        <dbReference type="Rhea" id="RHEA:23032"/>
        <dbReference type="ChEBI" id="CHEBI:15378"/>
        <dbReference type="ChEBI" id="CHEBI:30616"/>
        <dbReference type="ChEBI" id="CHEBI:43474"/>
        <dbReference type="ChEBI" id="CHEBI:137981"/>
        <dbReference type="ChEBI" id="CHEBI:147287"/>
        <dbReference type="ChEBI" id="CHEBI:456216"/>
        <dbReference type="EC" id="6.3.3.1"/>
    </reaction>
</comment>
<comment type="pathway">
    <text evidence="1">Purine metabolism; IMP biosynthesis via de novo pathway; 5-amino-1-(5-phospho-D-ribosyl)imidazole from N(2)-formyl-N(1)-(5-phospho-D-ribosyl)glycinamide: step 2/2.</text>
</comment>
<comment type="subcellular location">
    <subcellularLocation>
        <location evidence="1">Cytoplasm</location>
    </subcellularLocation>
</comment>
<comment type="similarity">
    <text evidence="1">Belongs to the AIR synthase family.</text>
</comment>
<protein>
    <recommendedName>
        <fullName evidence="1">Phosphoribosylformylglycinamidine cyclo-ligase</fullName>
        <ecNumber evidence="1">6.3.3.1</ecNumber>
    </recommendedName>
    <alternativeName>
        <fullName evidence="1">AIR synthase</fullName>
    </alternativeName>
    <alternativeName>
        <fullName evidence="1">AIRS</fullName>
    </alternativeName>
    <alternativeName>
        <fullName evidence="1">Phosphoribosyl-aminoimidazole synthetase</fullName>
    </alternativeName>
</protein>
<evidence type="ECO:0000255" key="1">
    <source>
        <dbReference type="HAMAP-Rule" id="MF_00741"/>
    </source>
</evidence>
<feature type="chain" id="PRO_0000258350" description="Phosphoribosylformylglycinamidine cyclo-ligase">
    <location>
        <begin position="1"/>
        <end position="339"/>
    </location>
</feature>